<dbReference type="EMBL" id="CP001127">
    <property type="protein sequence ID" value="ACF91973.1"/>
    <property type="molecule type" value="Genomic_DNA"/>
</dbReference>
<dbReference type="RefSeq" id="WP_001284251.1">
    <property type="nucleotide sequence ID" value="NC_011094.1"/>
</dbReference>
<dbReference type="SMR" id="B4TSM2"/>
<dbReference type="KEGG" id="sew:SeSA_A1175"/>
<dbReference type="HOGENOM" id="CLU_144710_3_1_6"/>
<dbReference type="Proteomes" id="UP000001865">
    <property type="component" value="Chromosome"/>
</dbReference>
<dbReference type="Gene3D" id="1.10.1660.10">
    <property type="match status" value="1"/>
</dbReference>
<dbReference type="HAMAP" id="MF_01155">
    <property type="entry name" value="CbpM"/>
    <property type="match status" value="1"/>
</dbReference>
<dbReference type="InterPro" id="IPR022835">
    <property type="entry name" value="CbpM"/>
</dbReference>
<dbReference type="NCBIfam" id="NF007617">
    <property type="entry name" value="PRK10265.1"/>
    <property type="match status" value="1"/>
</dbReference>
<dbReference type="Pfam" id="PF13591">
    <property type="entry name" value="MerR_2"/>
    <property type="match status" value="1"/>
</dbReference>
<sequence>MANITVTFTITEFCLHTGVTEEELNEIVGLGVIEPYEDDNADWQFDDRAASVVQRALRLREELALDWPGIAVALTLLEENSRLREENRLLLQRLSRFISHP</sequence>
<evidence type="ECO:0000255" key="1">
    <source>
        <dbReference type="HAMAP-Rule" id="MF_01155"/>
    </source>
</evidence>
<name>CBPM_SALSV</name>
<organism>
    <name type="scientific">Salmonella schwarzengrund (strain CVM19633)</name>
    <dbReference type="NCBI Taxonomy" id="439843"/>
    <lineage>
        <taxon>Bacteria</taxon>
        <taxon>Pseudomonadati</taxon>
        <taxon>Pseudomonadota</taxon>
        <taxon>Gammaproteobacteria</taxon>
        <taxon>Enterobacterales</taxon>
        <taxon>Enterobacteriaceae</taxon>
        <taxon>Salmonella</taxon>
    </lineage>
</organism>
<feature type="chain" id="PRO_1000137782" description="Chaperone modulatory protein CbpM">
    <location>
        <begin position="1"/>
        <end position="101"/>
    </location>
</feature>
<comment type="function">
    <text evidence="1">Interacts with CbpA and inhibits both the DnaJ-like co-chaperone activity and the DNA binding activity of CbpA. Together with CbpA, modulates the activity of the DnaK chaperone system. Does not inhibit the co-chaperone activity of DnaJ.</text>
</comment>
<comment type="similarity">
    <text evidence="1">Belongs to the CbpM family.</text>
</comment>
<protein>
    <recommendedName>
        <fullName evidence="1">Chaperone modulatory protein CbpM</fullName>
    </recommendedName>
</protein>
<proteinExistence type="inferred from homology"/>
<accession>B4TSM2</accession>
<gene>
    <name evidence="1" type="primary">cbpM</name>
    <name type="ordered locus">SeSA_A1175</name>
</gene>
<reference key="1">
    <citation type="journal article" date="2011" name="J. Bacteriol.">
        <title>Comparative genomics of 28 Salmonella enterica isolates: evidence for CRISPR-mediated adaptive sublineage evolution.</title>
        <authorList>
            <person name="Fricke W.F."/>
            <person name="Mammel M.K."/>
            <person name="McDermott P.F."/>
            <person name="Tartera C."/>
            <person name="White D.G."/>
            <person name="Leclerc J.E."/>
            <person name="Ravel J."/>
            <person name="Cebula T.A."/>
        </authorList>
    </citation>
    <scope>NUCLEOTIDE SEQUENCE [LARGE SCALE GENOMIC DNA]</scope>
    <source>
        <strain>CVM19633</strain>
    </source>
</reference>